<proteinExistence type="inferred from homology"/>
<name>GUAA_CHLPM</name>
<organism>
    <name type="scientific">Chlorobium phaeovibrioides (strain DSM 265 / 1930)</name>
    <name type="common">Prosthecochloris vibrioformis (strain DSM 265)</name>
    <dbReference type="NCBI Taxonomy" id="290318"/>
    <lineage>
        <taxon>Bacteria</taxon>
        <taxon>Pseudomonadati</taxon>
        <taxon>Chlorobiota</taxon>
        <taxon>Chlorobiia</taxon>
        <taxon>Chlorobiales</taxon>
        <taxon>Chlorobiaceae</taxon>
        <taxon>Chlorobium/Pelodictyon group</taxon>
        <taxon>Chlorobium</taxon>
    </lineage>
</organism>
<gene>
    <name evidence="1" type="primary">guaA</name>
    <name type="ordered locus">Cvib_1589</name>
</gene>
<comment type="function">
    <text evidence="1">Catalyzes the synthesis of GMP from XMP.</text>
</comment>
<comment type="catalytic activity">
    <reaction evidence="1">
        <text>XMP + L-glutamine + ATP + H2O = GMP + L-glutamate + AMP + diphosphate + 2 H(+)</text>
        <dbReference type="Rhea" id="RHEA:11680"/>
        <dbReference type="ChEBI" id="CHEBI:15377"/>
        <dbReference type="ChEBI" id="CHEBI:15378"/>
        <dbReference type="ChEBI" id="CHEBI:29985"/>
        <dbReference type="ChEBI" id="CHEBI:30616"/>
        <dbReference type="ChEBI" id="CHEBI:33019"/>
        <dbReference type="ChEBI" id="CHEBI:57464"/>
        <dbReference type="ChEBI" id="CHEBI:58115"/>
        <dbReference type="ChEBI" id="CHEBI:58359"/>
        <dbReference type="ChEBI" id="CHEBI:456215"/>
        <dbReference type="EC" id="6.3.5.2"/>
    </reaction>
</comment>
<comment type="pathway">
    <text evidence="1">Purine metabolism; GMP biosynthesis; GMP from XMP (L-Gln route): step 1/1.</text>
</comment>
<comment type="subunit">
    <text evidence="1">Homodimer.</text>
</comment>
<sequence length="513" mass="56727">MQSVLVLDFGSQYTQLIARRIRELGIYSEILPYSTTPETIREHNPRAIILSGGPTSVYGDSAILPHPGIFSLGLPILGICYGLQAIANHFGGAVESSSKQEFGRAKILVDRSADHESLLFEGFPDSDVWMSHGDKVTRMPEGFRVTASSGNSEMCAIESYGSKAALKIYGLQFHPEVQHSLYGKQLLGNFLLNIAGITPDWSSKSFIDHQIEDIRERAGNNTVICGISGGVDSTVAAVLVSKAIGKQLHCVFVDNGLLRKNEAEKVMQFLKPLGLKVTLADSRDLFLTRLKGVASPEKKRKIIGRTFIRVFEEHIHEEKFLVQGTLYPDVIESVSVKGPSETIKSHHNVGGLPKRMKLKLIEPLRELFKDEVRAVGRELGIAEDILMRHPFPGPGLAVRVLGSVNPERVEILQNADEIFIEELKSSGLYQQVWQAFSVLLPVQSVGVMGDKRTYENVLALRAVESTDGMTADWAHLPHDFLAKVSNRIINEVRGINRVAYDISSKPPATIEWE</sequence>
<accession>A4SGJ0</accession>
<protein>
    <recommendedName>
        <fullName evidence="1">GMP synthase [glutamine-hydrolyzing]</fullName>
        <ecNumber evidence="1">6.3.5.2</ecNumber>
    </recommendedName>
    <alternativeName>
        <fullName evidence="1">GMP synthetase</fullName>
    </alternativeName>
    <alternativeName>
        <fullName evidence="1">Glutamine amidotransferase</fullName>
    </alternativeName>
</protein>
<evidence type="ECO:0000255" key="1">
    <source>
        <dbReference type="HAMAP-Rule" id="MF_00344"/>
    </source>
</evidence>
<reference key="1">
    <citation type="submission" date="2007-03" db="EMBL/GenBank/DDBJ databases">
        <title>Complete sequence of Prosthecochloris vibrioformis DSM 265.</title>
        <authorList>
            <consortium name="US DOE Joint Genome Institute"/>
            <person name="Copeland A."/>
            <person name="Lucas S."/>
            <person name="Lapidus A."/>
            <person name="Barry K."/>
            <person name="Detter J.C."/>
            <person name="Glavina del Rio T."/>
            <person name="Hammon N."/>
            <person name="Israni S."/>
            <person name="Pitluck S."/>
            <person name="Schmutz J."/>
            <person name="Larimer F."/>
            <person name="Land M."/>
            <person name="Hauser L."/>
            <person name="Mikhailova N."/>
            <person name="Li T."/>
            <person name="Overmann J."/>
            <person name="Schuster S.C."/>
            <person name="Bryant D.A."/>
            <person name="Richardson P."/>
        </authorList>
    </citation>
    <scope>NUCLEOTIDE SEQUENCE [LARGE SCALE GENOMIC DNA]</scope>
    <source>
        <strain>DSM 265 / 1930</strain>
    </source>
</reference>
<keyword id="KW-0067">ATP-binding</keyword>
<keyword id="KW-0315">Glutamine amidotransferase</keyword>
<keyword id="KW-0332">GMP biosynthesis</keyword>
<keyword id="KW-0436">Ligase</keyword>
<keyword id="KW-0547">Nucleotide-binding</keyword>
<keyword id="KW-0658">Purine biosynthesis</keyword>
<feature type="chain" id="PRO_1000120364" description="GMP synthase [glutamine-hydrolyzing]">
    <location>
        <begin position="1"/>
        <end position="513"/>
    </location>
</feature>
<feature type="domain" description="Glutamine amidotransferase type-1" evidence="1">
    <location>
        <begin position="3"/>
        <end position="200"/>
    </location>
</feature>
<feature type="domain" description="GMPS ATP-PPase" evidence="1">
    <location>
        <begin position="201"/>
        <end position="388"/>
    </location>
</feature>
<feature type="active site" description="Nucleophile" evidence="1">
    <location>
        <position position="80"/>
    </location>
</feature>
<feature type="active site" evidence="1">
    <location>
        <position position="174"/>
    </location>
</feature>
<feature type="active site" evidence="1">
    <location>
        <position position="176"/>
    </location>
</feature>
<feature type="binding site" evidence="1">
    <location>
        <begin position="228"/>
        <end position="234"/>
    </location>
    <ligand>
        <name>ATP</name>
        <dbReference type="ChEBI" id="CHEBI:30616"/>
    </ligand>
</feature>
<dbReference type="EC" id="6.3.5.2" evidence="1"/>
<dbReference type="EMBL" id="CP000607">
    <property type="protein sequence ID" value="ABP37599.1"/>
    <property type="molecule type" value="Genomic_DNA"/>
</dbReference>
<dbReference type="SMR" id="A4SGJ0"/>
<dbReference type="STRING" id="290318.Cvib_1589"/>
<dbReference type="MEROPS" id="C26.957"/>
<dbReference type="KEGG" id="pvi:Cvib_1589"/>
<dbReference type="eggNOG" id="COG0518">
    <property type="taxonomic scope" value="Bacteria"/>
</dbReference>
<dbReference type="eggNOG" id="COG0519">
    <property type="taxonomic scope" value="Bacteria"/>
</dbReference>
<dbReference type="HOGENOM" id="CLU_014340_0_5_10"/>
<dbReference type="OrthoDB" id="9802219at2"/>
<dbReference type="UniPathway" id="UPA00189">
    <property type="reaction ID" value="UER00296"/>
</dbReference>
<dbReference type="GO" id="GO:0005829">
    <property type="term" value="C:cytosol"/>
    <property type="evidence" value="ECO:0007669"/>
    <property type="project" value="TreeGrafter"/>
</dbReference>
<dbReference type="GO" id="GO:0005524">
    <property type="term" value="F:ATP binding"/>
    <property type="evidence" value="ECO:0007669"/>
    <property type="project" value="UniProtKB-UniRule"/>
</dbReference>
<dbReference type="GO" id="GO:0003921">
    <property type="term" value="F:GMP synthase activity"/>
    <property type="evidence" value="ECO:0007669"/>
    <property type="project" value="InterPro"/>
</dbReference>
<dbReference type="CDD" id="cd01742">
    <property type="entry name" value="GATase1_GMP_Synthase"/>
    <property type="match status" value="1"/>
</dbReference>
<dbReference type="CDD" id="cd01997">
    <property type="entry name" value="GMP_synthase_C"/>
    <property type="match status" value="1"/>
</dbReference>
<dbReference type="FunFam" id="3.30.300.10:FF:000002">
    <property type="entry name" value="GMP synthase [glutamine-hydrolyzing]"/>
    <property type="match status" value="1"/>
</dbReference>
<dbReference type="FunFam" id="3.40.50.620:FF:000001">
    <property type="entry name" value="GMP synthase [glutamine-hydrolyzing]"/>
    <property type="match status" value="1"/>
</dbReference>
<dbReference type="FunFam" id="3.40.50.880:FF:000001">
    <property type="entry name" value="GMP synthase [glutamine-hydrolyzing]"/>
    <property type="match status" value="1"/>
</dbReference>
<dbReference type="Gene3D" id="3.30.300.10">
    <property type="match status" value="1"/>
</dbReference>
<dbReference type="Gene3D" id="3.40.50.880">
    <property type="match status" value="1"/>
</dbReference>
<dbReference type="Gene3D" id="3.40.50.620">
    <property type="entry name" value="HUPs"/>
    <property type="match status" value="1"/>
</dbReference>
<dbReference type="HAMAP" id="MF_00344">
    <property type="entry name" value="GMP_synthase"/>
    <property type="match status" value="1"/>
</dbReference>
<dbReference type="InterPro" id="IPR029062">
    <property type="entry name" value="Class_I_gatase-like"/>
</dbReference>
<dbReference type="InterPro" id="IPR017926">
    <property type="entry name" value="GATASE"/>
</dbReference>
<dbReference type="InterPro" id="IPR001674">
    <property type="entry name" value="GMP_synth_C"/>
</dbReference>
<dbReference type="InterPro" id="IPR004739">
    <property type="entry name" value="GMP_synth_GATase"/>
</dbReference>
<dbReference type="InterPro" id="IPR022955">
    <property type="entry name" value="GMP_synthase"/>
</dbReference>
<dbReference type="InterPro" id="IPR025777">
    <property type="entry name" value="GMPS_ATP_PPase_dom"/>
</dbReference>
<dbReference type="InterPro" id="IPR022310">
    <property type="entry name" value="NAD/GMP_synthase"/>
</dbReference>
<dbReference type="InterPro" id="IPR014729">
    <property type="entry name" value="Rossmann-like_a/b/a_fold"/>
</dbReference>
<dbReference type="NCBIfam" id="TIGR00884">
    <property type="entry name" value="guaA_Cterm"/>
    <property type="match status" value="1"/>
</dbReference>
<dbReference type="NCBIfam" id="TIGR00888">
    <property type="entry name" value="guaA_Nterm"/>
    <property type="match status" value="1"/>
</dbReference>
<dbReference type="NCBIfam" id="NF000848">
    <property type="entry name" value="PRK00074.1"/>
    <property type="match status" value="1"/>
</dbReference>
<dbReference type="PANTHER" id="PTHR11922:SF2">
    <property type="entry name" value="GMP SYNTHASE [GLUTAMINE-HYDROLYZING]"/>
    <property type="match status" value="1"/>
</dbReference>
<dbReference type="PANTHER" id="PTHR11922">
    <property type="entry name" value="GMP SYNTHASE-RELATED"/>
    <property type="match status" value="1"/>
</dbReference>
<dbReference type="Pfam" id="PF00117">
    <property type="entry name" value="GATase"/>
    <property type="match status" value="1"/>
</dbReference>
<dbReference type="Pfam" id="PF00958">
    <property type="entry name" value="GMP_synt_C"/>
    <property type="match status" value="1"/>
</dbReference>
<dbReference type="Pfam" id="PF02540">
    <property type="entry name" value="NAD_synthase"/>
    <property type="match status" value="1"/>
</dbReference>
<dbReference type="PRINTS" id="PR00097">
    <property type="entry name" value="ANTSNTHASEII"/>
</dbReference>
<dbReference type="PRINTS" id="PR00096">
    <property type="entry name" value="GATASE"/>
</dbReference>
<dbReference type="SUPFAM" id="SSF52402">
    <property type="entry name" value="Adenine nucleotide alpha hydrolases-like"/>
    <property type="match status" value="1"/>
</dbReference>
<dbReference type="SUPFAM" id="SSF52317">
    <property type="entry name" value="Class I glutamine amidotransferase-like"/>
    <property type="match status" value="1"/>
</dbReference>
<dbReference type="SUPFAM" id="SSF54810">
    <property type="entry name" value="GMP synthetase C-terminal dimerisation domain"/>
    <property type="match status" value="1"/>
</dbReference>
<dbReference type="PROSITE" id="PS51273">
    <property type="entry name" value="GATASE_TYPE_1"/>
    <property type="match status" value="1"/>
</dbReference>
<dbReference type="PROSITE" id="PS51553">
    <property type="entry name" value="GMPS_ATP_PPASE"/>
    <property type="match status" value="1"/>
</dbReference>